<comment type="function">
    <text evidence="1">Allows the formation of correctly charged Gln-tRNA(Gln) through the transamidation of misacylated Glu-tRNA(Gln) in organisms which lack glutaminyl-tRNA synthetase. The reaction takes place in the presence of glutamine and ATP through an activated gamma-phospho-Glu-tRNA(Gln).</text>
</comment>
<comment type="catalytic activity">
    <reaction evidence="1">
        <text>L-glutamyl-tRNA(Gln) + L-glutamine + ATP + H2O = L-glutaminyl-tRNA(Gln) + L-glutamate + ADP + phosphate + H(+)</text>
        <dbReference type="Rhea" id="RHEA:17521"/>
        <dbReference type="Rhea" id="RHEA-COMP:9681"/>
        <dbReference type="Rhea" id="RHEA-COMP:9684"/>
        <dbReference type="ChEBI" id="CHEBI:15377"/>
        <dbReference type="ChEBI" id="CHEBI:15378"/>
        <dbReference type="ChEBI" id="CHEBI:29985"/>
        <dbReference type="ChEBI" id="CHEBI:30616"/>
        <dbReference type="ChEBI" id="CHEBI:43474"/>
        <dbReference type="ChEBI" id="CHEBI:58359"/>
        <dbReference type="ChEBI" id="CHEBI:78520"/>
        <dbReference type="ChEBI" id="CHEBI:78521"/>
        <dbReference type="ChEBI" id="CHEBI:456216"/>
        <dbReference type="EC" id="6.3.5.7"/>
    </reaction>
</comment>
<comment type="subunit">
    <text evidence="1">Heterotrimer of A, B and C subunits.</text>
</comment>
<comment type="similarity">
    <text evidence="1">Belongs to the amidase family. GatA subfamily.</text>
</comment>
<organism>
    <name type="scientific">Legionella pneumophila (strain Paris)</name>
    <dbReference type="NCBI Taxonomy" id="297246"/>
    <lineage>
        <taxon>Bacteria</taxon>
        <taxon>Pseudomonadati</taxon>
        <taxon>Pseudomonadota</taxon>
        <taxon>Gammaproteobacteria</taxon>
        <taxon>Legionellales</taxon>
        <taxon>Legionellaceae</taxon>
        <taxon>Legionella</taxon>
    </lineage>
</organism>
<sequence>MEHYSLAQLSKALHNREFSSVELTQHCINKIQSNKDLNAFISLDEDQALKEAQSADLVLKNGEGKPLTGIPMALKDLFCTKRLNTTCASKMLANFQAPYDATIVTKFKQNGAIIIGKTNMDEFAMGSSNENSYFGSVKNPWDRERVPGGSSGGSAAAVAGNLVPFAIGSDTGGSIRQPAAFCGISGIKPTYGLVSRYGMVAFASSLDQAGPFAKSAEDLAMILHCIAGFDSKDSTSVDRVIPDYSAEIKKPVDKIRIGLPSCFFQPQVEKGIQDAIHNAVKLFENLGAEIIEIDLKLQPFWVPCYYVIACAEASSNLSRYDGIRFGHRSKSASTLIELITNSRSEGFGNEVKRRILTGTHVLSSGFFDAYYLHAQKVRRLIRDELITTLNSVDVILGPTTPTTAFKLGEKINDPIQNYLADVFTVAANLAGLPAISIPTGFENKLPIGLQLMGKHFSESRLLAIAHHYQQHTNWHLANPNKQG</sequence>
<feature type="chain" id="PRO_0000241113" description="Glutamyl-tRNA(Gln) amidotransferase subunit A">
    <location>
        <begin position="1"/>
        <end position="483"/>
    </location>
</feature>
<feature type="active site" description="Charge relay system" evidence="1">
    <location>
        <position position="75"/>
    </location>
</feature>
<feature type="active site" description="Charge relay system" evidence="1">
    <location>
        <position position="150"/>
    </location>
</feature>
<feature type="active site" description="Acyl-ester intermediate" evidence="1">
    <location>
        <position position="174"/>
    </location>
</feature>
<name>GATA_LEGPA</name>
<protein>
    <recommendedName>
        <fullName evidence="1">Glutamyl-tRNA(Gln) amidotransferase subunit A</fullName>
        <shortName evidence="1">Glu-ADT subunit A</shortName>
        <ecNumber evidence="1">6.3.5.7</ecNumber>
    </recommendedName>
</protein>
<reference key="1">
    <citation type="journal article" date="2004" name="Nat. Genet.">
        <title>Evidence in the Legionella pneumophila genome for exploitation of host cell functions and high genome plasticity.</title>
        <authorList>
            <person name="Cazalet C."/>
            <person name="Rusniok C."/>
            <person name="Brueggemann H."/>
            <person name="Zidane N."/>
            <person name="Magnier A."/>
            <person name="Ma L."/>
            <person name="Tichit M."/>
            <person name="Jarraud S."/>
            <person name="Bouchier C."/>
            <person name="Vandenesch F."/>
            <person name="Kunst F."/>
            <person name="Etienne J."/>
            <person name="Glaser P."/>
            <person name="Buchrieser C."/>
        </authorList>
    </citation>
    <scope>NUCLEOTIDE SEQUENCE [LARGE SCALE GENOMIC DNA]</scope>
    <source>
        <strain>Paris</strain>
    </source>
</reference>
<dbReference type="EC" id="6.3.5.7" evidence="1"/>
<dbReference type="EMBL" id="CR628336">
    <property type="protein sequence ID" value="CAH12853.1"/>
    <property type="molecule type" value="Genomic_DNA"/>
</dbReference>
<dbReference type="RefSeq" id="WP_011214004.1">
    <property type="nucleotide sequence ID" value="NC_006368.1"/>
</dbReference>
<dbReference type="SMR" id="Q5X4H5"/>
<dbReference type="KEGG" id="lpp:lpp1701"/>
<dbReference type="LegioList" id="lpp1701"/>
<dbReference type="HOGENOM" id="CLU_009600_0_3_6"/>
<dbReference type="GO" id="GO:0030956">
    <property type="term" value="C:glutamyl-tRNA(Gln) amidotransferase complex"/>
    <property type="evidence" value="ECO:0007669"/>
    <property type="project" value="InterPro"/>
</dbReference>
<dbReference type="GO" id="GO:0005524">
    <property type="term" value="F:ATP binding"/>
    <property type="evidence" value="ECO:0007669"/>
    <property type="project" value="UniProtKB-KW"/>
</dbReference>
<dbReference type="GO" id="GO:0050567">
    <property type="term" value="F:glutaminyl-tRNA synthase (glutamine-hydrolyzing) activity"/>
    <property type="evidence" value="ECO:0007669"/>
    <property type="project" value="UniProtKB-UniRule"/>
</dbReference>
<dbReference type="GO" id="GO:0006412">
    <property type="term" value="P:translation"/>
    <property type="evidence" value="ECO:0007669"/>
    <property type="project" value="UniProtKB-UniRule"/>
</dbReference>
<dbReference type="Gene3D" id="3.90.1300.10">
    <property type="entry name" value="Amidase signature (AS) domain"/>
    <property type="match status" value="1"/>
</dbReference>
<dbReference type="HAMAP" id="MF_00120">
    <property type="entry name" value="GatA"/>
    <property type="match status" value="1"/>
</dbReference>
<dbReference type="InterPro" id="IPR000120">
    <property type="entry name" value="Amidase"/>
</dbReference>
<dbReference type="InterPro" id="IPR020556">
    <property type="entry name" value="Amidase_CS"/>
</dbReference>
<dbReference type="InterPro" id="IPR023631">
    <property type="entry name" value="Amidase_dom"/>
</dbReference>
<dbReference type="InterPro" id="IPR036928">
    <property type="entry name" value="AS_sf"/>
</dbReference>
<dbReference type="InterPro" id="IPR004412">
    <property type="entry name" value="GatA"/>
</dbReference>
<dbReference type="NCBIfam" id="TIGR00132">
    <property type="entry name" value="gatA"/>
    <property type="match status" value="1"/>
</dbReference>
<dbReference type="PANTHER" id="PTHR11895:SF151">
    <property type="entry name" value="GLUTAMYL-TRNA(GLN) AMIDOTRANSFERASE SUBUNIT A"/>
    <property type="match status" value="1"/>
</dbReference>
<dbReference type="PANTHER" id="PTHR11895">
    <property type="entry name" value="TRANSAMIDASE"/>
    <property type="match status" value="1"/>
</dbReference>
<dbReference type="Pfam" id="PF01425">
    <property type="entry name" value="Amidase"/>
    <property type="match status" value="1"/>
</dbReference>
<dbReference type="SUPFAM" id="SSF75304">
    <property type="entry name" value="Amidase signature (AS) enzymes"/>
    <property type="match status" value="1"/>
</dbReference>
<dbReference type="PROSITE" id="PS00571">
    <property type="entry name" value="AMIDASES"/>
    <property type="match status" value="1"/>
</dbReference>
<gene>
    <name evidence="1" type="primary">gatA</name>
    <name type="ordered locus">lpp1701</name>
</gene>
<keyword id="KW-0067">ATP-binding</keyword>
<keyword id="KW-0436">Ligase</keyword>
<keyword id="KW-0547">Nucleotide-binding</keyword>
<keyword id="KW-0648">Protein biosynthesis</keyword>
<evidence type="ECO:0000255" key="1">
    <source>
        <dbReference type="HAMAP-Rule" id="MF_00120"/>
    </source>
</evidence>
<accession>Q5X4H5</accession>
<proteinExistence type="inferred from homology"/>